<keyword id="KW-0067">ATP-binding</keyword>
<keyword id="KW-0319">Glycerol metabolism</keyword>
<keyword id="KW-0418">Kinase</keyword>
<keyword id="KW-0547">Nucleotide-binding</keyword>
<keyword id="KW-0808">Transferase</keyword>
<proteinExistence type="inferred from homology"/>
<gene>
    <name evidence="1" type="primary">glpK</name>
    <name type="ordered locus">Achl_1985</name>
</gene>
<accession>B8H8T1</accession>
<comment type="function">
    <text evidence="1">Key enzyme in the regulation of glycerol uptake and metabolism. Catalyzes the phosphorylation of glycerol to yield sn-glycerol 3-phosphate.</text>
</comment>
<comment type="catalytic activity">
    <reaction evidence="1">
        <text>glycerol + ATP = sn-glycerol 3-phosphate + ADP + H(+)</text>
        <dbReference type="Rhea" id="RHEA:21644"/>
        <dbReference type="ChEBI" id="CHEBI:15378"/>
        <dbReference type="ChEBI" id="CHEBI:17754"/>
        <dbReference type="ChEBI" id="CHEBI:30616"/>
        <dbReference type="ChEBI" id="CHEBI:57597"/>
        <dbReference type="ChEBI" id="CHEBI:456216"/>
        <dbReference type="EC" id="2.7.1.30"/>
    </reaction>
</comment>
<comment type="activity regulation">
    <text evidence="1">Inhibited by fructose 1,6-bisphosphate (FBP).</text>
</comment>
<comment type="pathway">
    <text evidence="1">Polyol metabolism; glycerol degradation via glycerol kinase pathway; sn-glycerol 3-phosphate from glycerol: step 1/1.</text>
</comment>
<comment type="similarity">
    <text evidence="1">Belongs to the FGGY kinase family.</text>
</comment>
<sequence>MNQYVIAIDQGTTSTRAIIFDHSGAIVSSGQMEHEQIFPKAGWVEHDAAEIWNNTREVIASALSKANLTRHDIAAVGITNQRETAVVWDKTTGEPVYNAIVWQDTRTQDIVDELSKDGGGDRFKQKVGLPLATYFSGTKIKWILDNVDGAREKAEAGNLVFGNTDCWVLWNLTGGVDGGVHVTDVTNASRTLFMDLETLQWDEEILGIFGVPRSMMPEIKSSSEVYGTVHTSQLLRETPVAGILGDQQAATFGQAAFETGEAKNTYGTGCFLIFNTGEEIVHSKNGLLTTVGYKLGDAKPHYALEGSIAVTGSLIQWLRDNLGMISSAPEVETLAASVKDNGGVYIVPAFSGLFAPYWRPDARGAIVGLTRFVNKNHIARAALESTAFQTREVLDAVNADSGVPLTELKVDGGMVANDALMQFQADILGVPVIRPKVIETTALGAAYAAGLAVGFWKDLGELSSNWSEDKRWEPQLDQAEQERQMRLWRKAVTKSMDWVDEDVK</sequence>
<reference key="1">
    <citation type="submission" date="2009-01" db="EMBL/GenBank/DDBJ databases">
        <title>Complete sequence of chromosome of Arthrobacter chlorophenolicus A6.</title>
        <authorList>
            <consortium name="US DOE Joint Genome Institute"/>
            <person name="Lucas S."/>
            <person name="Copeland A."/>
            <person name="Lapidus A."/>
            <person name="Glavina del Rio T."/>
            <person name="Tice H."/>
            <person name="Bruce D."/>
            <person name="Goodwin L."/>
            <person name="Pitluck S."/>
            <person name="Goltsman E."/>
            <person name="Clum A."/>
            <person name="Larimer F."/>
            <person name="Land M."/>
            <person name="Hauser L."/>
            <person name="Kyrpides N."/>
            <person name="Mikhailova N."/>
            <person name="Jansson J."/>
            <person name="Richardson P."/>
        </authorList>
    </citation>
    <scope>NUCLEOTIDE SEQUENCE [LARGE SCALE GENOMIC DNA]</scope>
    <source>
        <strain>ATCC 700700 / DSM 12829 / CIP 107037 / JCM 12360 / KCTC 9906 / NCIMB 13794 / A6</strain>
    </source>
</reference>
<organism>
    <name type="scientific">Pseudarthrobacter chlorophenolicus (strain ATCC 700700 / DSM 12829 / CIP 107037 / JCM 12360 / KCTC 9906 / NCIMB 13794 / A6)</name>
    <name type="common">Arthrobacter chlorophenolicus</name>
    <dbReference type="NCBI Taxonomy" id="452863"/>
    <lineage>
        <taxon>Bacteria</taxon>
        <taxon>Bacillati</taxon>
        <taxon>Actinomycetota</taxon>
        <taxon>Actinomycetes</taxon>
        <taxon>Micrococcales</taxon>
        <taxon>Micrococcaceae</taxon>
        <taxon>Pseudarthrobacter</taxon>
    </lineage>
</organism>
<protein>
    <recommendedName>
        <fullName evidence="1">Glycerol kinase</fullName>
        <ecNumber evidence="1">2.7.1.30</ecNumber>
    </recommendedName>
    <alternativeName>
        <fullName evidence="1">ATP:glycerol 3-phosphotransferase</fullName>
    </alternativeName>
    <alternativeName>
        <fullName evidence="1">Glycerokinase</fullName>
        <shortName evidence="1">GK</shortName>
    </alternativeName>
</protein>
<name>GLPK_PSECP</name>
<feature type="chain" id="PRO_1000124178" description="Glycerol kinase">
    <location>
        <begin position="1"/>
        <end position="504"/>
    </location>
</feature>
<feature type="binding site" evidence="1">
    <location>
        <position position="12"/>
    </location>
    <ligand>
        <name>ADP</name>
        <dbReference type="ChEBI" id="CHEBI:456216"/>
    </ligand>
</feature>
<feature type="binding site" evidence="1">
    <location>
        <position position="12"/>
    </location>
    <ligand>
        <name>ATP</name>
        <dbReference type="ChEBI" id="CHEBI:30616"/>
    </ligand>
</feature>
<feature type="binding site" evidence="1">
    <location>
        <position position="12"/>
    </location>
    <ligand>
        <name>sn-glycerol 3-phosphate</name>
        <dbReference type="ChEBI" id="CHEBI:57597"/>
    </ligand>
</feature>
<feature type="binding site" evidence="1">
    <location>
        <position position="13"/>
    </location>
    <ligand>
        <name>ATP</name>
        <dbReference type="ChEBI" id="CHEBI:30616"/>
    </ligand>
</feature>
<feature type="binding site" evidence="1">
    <location>
        <position position="14"/>
    </location>
    <ligand>
        <name>ATP</name>
        <dbReference type="ChEBI" id="CHEBI:30616"/>
    </ligand>
</feature>
<feature type="binding site" evidence="1">
    <location>
        <position position="16"/>
    </location>
    <ligand>
        <name>ADP</name>
        <dbReference type="ChEBI" id="CHEBI:456216"/>
    </ligand>
</feature>
<feature type="binding site" evidence="1">
    <location>
        <position position="82"/>
    </location>
    <ligand>
        <name>glycerol</name>
        <dbReference type="ChEBI" id="CHEBI:17754"/>
    </ligand>
</feature>
<feature type="binding site" evidence="1">
    <location>
        <position position="82"/>
    </location>
    <ligand>
        <name>sn-glycerol 3-phosphate</name>
        <dbReference type="ChEBI" id="CHEBI:57597"/>
    </ligand>
</feature>
<feature type="binding site" evidence="1">
    <location>
        <position position="83"/>
    </location>
    <ligand>
        <name>glycerol</name>
        <dbReference type="ChEBI" id="CHEBI:17754"/>
    </ligand>
</feature>
<feature type="binding site" evidence="1">
    <location>
        <position position="83"/>
    </location>
    <ligand>
        <name>sn-glycerol 3-phosphate</name>
        <dbReference type="ChEBI" id="CHEBI:57597"/>
    </ligand>
</feature>
<feature type="binding site" evidence="1">
    <location>
        <position position="134"/>
    </location>
    <ligand>
        <name>glycerol</name>
        <dbReference type="ChEBI" id="CHEBI:17754"/>
    </ligand>
</feature>
<feature type="binding site" evidence="1">
    <location>
        <position position="134"/>
    </location>
    <ligand>
        <name>sn-glycerol 3-phosphate</name>
        <dbReference type="ChEBI" id="CHEBI:57597"/>
    </ligand>
</feature>
<feature type="binding site" evidence="1">
    <location>
        <position position="246"/>
    </location>
    <ligand>
        <name>glycerol</name>
        <dbReference type="ChEBI" id="CHEBI:17754"/>
    </ligand>
</feature>
<feature type="binding site" evidence="1">
    <location>
        <position position="246"/>
    </location>
    <ligand>
        <name>sn-glycerol 3-phosphate</name>
        <dbReference type="ChEBI" id="CHEBI:57597"/>
    </ligand>
</feature>
<feature type="binding site" evidence="1">
    <location>
        <position position="247"/>
    </location>
    <ligand>
        <name>glycerol</name>
        <dbReference type="ChEBI" id="CHEBI:17754"/>
    </ligand>
</feature>
<feature type="binding site" evidence="1">
    <location>
        <position position="268"/>
    </location>
    <ligand>
        <name>ADP</name>
        <dbReference type="ChEBI" id="CHEBI:456216"/>
    </ligand>
</feature>
<feature type="binding site" evidence="1">
    <location>
        <position position="268"/>
    </location>
    <ligand>
        <name>ATP</name>
        <dbReference type="ChEBI" id="CHEBI:30616"/>
    </ligand>
</feature>
<feature type="binding site" evidence="1">
    <location>
        <position position="312"/>
    </location>
    <ligand>
        <name>ADP</name>
        <dbReference type="ChEBI" id="CHEBI:456216"/>
    </ligand>
</feature>
<feature type="binding site" evidence="1">
    <location>
        <position position="312"/>
    </location>
    <ligand>
        <name>ATP</name>
        <dbReference type="ChEBI" id="CHEBI:30616"/>
    </ligand>
</feature>
<feature type="binding site" evidence="1">
    <location>
        <position position="316"/>
    </location>
    <ligand>
        <name>ATP</name>
        <dbReference type="ChEBI" id="CHEBI:30616"/>
    </ligand>
</feature>
<feature type="binding site" evidence="1">
    <location>
        <position position="413"/>
    </location>
    <ligand>
        <name>ADP</name>
        <dbReference type="ChEBI" id="CHEBI:456216"/>
    </ligand>
</feature>
<feature type="binding site" evidence="1">
    <location>
        <position position="413"/>
    </location>
    <ligand>
        <name>ATP</name>
        <dbReference type="ChEBI" id="CHEBI:30616"/>
    </ligand>
</feature>
<feature type="binding site" evidence="1">
    <location>
        <position position="417"/>
    </location>
    <ligand>
        <name>ADP</name>
        <dbReference type="ChEBI" id="CHEBI:456216"/>
    </ligand>
</feature>
<dbReference type="EC" id="2.7.1.30" evidence="1"/>
<dbReference type="EMBL" id="CP001341">
    <property type="protein sequence ID" value="ACL39959.1"/>
    <property type="molecule type" value="Genomic_DNA"/>
</dbReference>
<dbReference type="RefSeq" id="WP_015937178.1">
    <property type="nucleotide sequence ID" value="NC_011886.1"/>
</dbReference>
<dbReference type="SMR" id="B8H8T1"/>
<dbReference type="STRING" id="452863.Achl_1985"/>
<dbReference type="KEGG" id="ach:Achl_1985"/>
<dbReference type="eggNOG" id="COG0554">
    <property type="taxonomic scope" value="Bacteria"/>
</dbReference>
<dbReference type="HOGENOM" id="CLU_009281_2_3_11"/>
<dbReference type="OrthoDB" id="9805576at2"/>
<dbReference type="UniPathway" id="UPA00618">
    <property type="reaction ID" value="UER00672"/>
</dbReference>
<dbReference type="Proteomes" id="UP000002505">
    <property type="component" value="Chromosome"/>
</dbReference>
<dbReference type="GO" id="GO:0005829">
    <property type="term" value="C:cytosol"/>
    <property type="evidence" value="ECO:0007669"/>
    <property type="project" value="TreeGrafter"/>
</dbReference>
<dbReference type="GO" id="GO:0005524">
    <property type="term" value="F:ATP binding"/>
    <property type="evidence" value="ECO:0007669"/>
    <property type="project" value="UniProtKB-UniRule"/>
</dbReference>
<dbReference type="GO" id="GO:0004370">
    <property type="term" value="F:glycerol kinase activity"/>
    <property type="evidence" value="ECO:0000250"/>
    <property type="project" value="UniProtKB"/>
</dbReference>
<dbReference type="GO" id="GO:0019563">
    <property type="term" value="P:glycerol catabolic process"/>
    <property type="evidence" value="ECO:0007669"/>
    <property type="project" value="UniProtKB-UniRule"/>
</dbReference>
<dbReference type="GO" id="GO:0006071">
    <property type="term" value="P:glycerol metabolic process"/>
    <property type="evidence" value="ECO:0000250"/>
    <property type="project" value="UniProtKB"/>
</dbReference>
<dbReference type="GO" id="GO:0006072">
    <property type="term" value="P:glycerol-3-phosphate metabolic process"/>
    <property type="evidence" value="ECO:0007669"/>
    <property type="project" value="InterPro"/>
</dbReference>
<dbReference type="CDD" id="cd07769">
    <property type="entry name" value="ASKHA_NBD_FGGY_GK"/>
    <property type="match status" value="1"/>
</dbReference>
<dbReference type="FunFam" id="3.30.420.40:FF:000007">
    <property type="entry name" value="Glycerol kinase"/>
    <property type="match status" value="1"/>
</dbReference>
<dbReference type="FunFam" id="3.30.420.40:FF:000008">
    <property type="entry name" value="Glycerol kinase"/>
    <property type="match status" value="1"/>
</dbReference>
<dbReference type="Gene3D" id="3.30.420.40">
    <property type="match status" value="2"/>
</dbReference>
<dbReference type="HAMAP" id="MF_00186">
    <property type="entry name" value="Glycerol_kin"/>
    <property type="match status" value="1"/>
</dbReference>
<dbReference type="InterPro" id="IPR043129">
    <property type="entry name" value="ATPase_NBD"/>
</dbReference>
<dbReference type="InterPro" id="IPR000577">
    <property type="entry name" value="Carb_kinase_FGGY"/>
</dbReference>
<dbReference type="InterPro" id="IPR018483">
    <property type="entry name" value="Carb_kinase_FGGY_CS"/>
</dbReference>
<dbReference type="InterPro" id="IPR018485">
    <property type="entry name" value="FGGY_C"/>
</dbReference>
<dbReference type="InterPro" id="IPR018484">
    <property type="entry name" value="FGGY_N"/>
</dbReference>
<dbReference type="InterPro" id="IPR005999">
    <property type="entry name" value="Glycerol_kin"/>
</dbReference>
<dbReference type="NCBIfam" id="TIGR01311">
    <property type="entry name" value="glycerol_kin"/>
    <property type="match status" value="1"/>
</dbReference>
<dbReference type="NCBIfam" id="NF000756">
    <property type="entry name" value="PRK00047.1"/>
    <property type="match status" value="1"/>
</dbReference>
<dbReference type="PANTHER" id="PTHR10196:SF69">
    <property type="entry name" value="GLYCEROL KINASE"/>
    <property type="match status" value="1"/>
</dbReference>
<dbReference type="PANTHER" id="PTHR10196">
    <property type="entry name" value="SUGAR KINASE"/>
    <property type="match status" value="1"/>
</dbReference>
<dbReference type="Pfam" id="PF02782">
    <property type="entry name" value="FGGY_C"/>
    <property type="match status" value="1"/>
</dbReference>
<dbReference type="Pfam" id="PF00370">
    <property type="entry name" value="FGGY_N"/>
    <property type="match status" value="1"/>
</dbReference>
<dbReference type="PIRSF" id="PIRSF000538">
    <property type="entry name" value="GlpK"/>
    <property type="match status" value="1"/>
</dbReference>
<dbReference type="SUPFAM" id="SSF53067">
    <property type="entry name" value="Actin-like ATPase domain"/>
    <property type="match status" value="2"/>
</dbReference>
<dbReference type="PROSITE" id="PS00933">
    <property type="entry name" value="FGGY_KINASES_1"/>
    <property type="match status" value="1"/>
</dbReference>
<dbReference type="PROSITE" id="PS00445">
    <property type="entry name" value="FGGY_KINASES_2"/>
    <property type="match status" value="1"/>
</dbReference>
<evidence type="ECO:0000255" key="1">
    <source>
        <dbReference type="HAMAP-Rule" id="MF_00186"/>
    </source>
</evidence>